<feature type="propeptide" id="PRO_0000431181" evidence="1">
    <location>
        <begin position="1"/>
        <end position="14"/>
    </location>
</feature>
<feature type="chain" id="PRO_0000361450" description="Photosystem II CP43 reaction center protein" evidence="1">
    <location>
        <begin position="15"/>
        <end position="473"/>
    </location>
</feature>
<feature type="transmembrane region" description="Helical" evidence="1">
    <location>
        <begin position="69"/>
        <end position="93"/>
    </location>
</feature>
<feature type="transmembrane region" description="Helical" evidence="1">
    <location>
        <begin position="134"/>
        <end position="155"/>
    </location>
</feature>
<feature type="transmembrane region" description="Helical" evidence="1">
    <location>
        <begin position="178"/>
        <end position="200"/>
    </location>
</feature>
<feature type="transmembrane region" description="Helical" evidence="1">
    <location>
        <begin position="255"/>
        <end position="275"/>
    </location>
</feature>
<feature type="transmembrane region" description="Helical" evidence="1">
    <location>
        <begin position="291"/>
        <end position="312"/>
    </location>
</feature>
<feature type="transmembrane region" description="Helical" evidence="1">
    <location>
        <begin position="447"/>
        <end position="471"/>
    </location>
</feature>
<feature type="binding site" evidence="1">
    <location>
        <position position="367"/>
    </location>
    <ligand>
        <name>[CaMn4O5] cluster</name>
        <dbReference type="ChEBI" id="CHEBI:189552"/>
    </ligand>
</feature>
<feature type="modified residue" description="N-acetylthreonine" evidence="1">
    <location>
        <position position="15"/>
    </location>
</feature>
<feature type="modified residue" description="Phosphothreonine" evidence="1">
    <location>
        <position position="15"/>
    </location>
</feature>
<name>PSBC_OENPA</name>
<sequence>MKTLYSLRRFYPVETLFNGTLALAGRDQETTGFAWWAGNARLINLSGKLLGAHVAHAGLIVFWAGAMNLFEVAHFVPEKPMYEQGLILLPHLATLGWGVGPGGEVIDTFPYFVSGVLHLISSAVLGFGGIYHALLGPETLEESFPFFGYVWKDRNKMTTILGIHLILLGLGAFLLVFKALYFGGVYDTWAPGGGDVRKITNLTLSPSILFGYLLKSPFGGEGWIVSVDDLEDIIGGHVWLGSICILGGIWHILTKPFAWARRALVWSGEAYLSYSLAALSVFGFIACCFVWFNNTAYPSEFYGPTGPEASQAQAFTFLVRDQRLGANVGSAQGPTGLGKYLMRSPTGEVIFGGETMRFWDLRAPWLEPLRGPNGLDLSRLKKDIQPWQERRSAEYMTHAPLGSLNSVGGVATEINAVNYVSPRSWLATSHFVLGFFLFVGHLWHAGRARAAAAGFEKGIDRDFEPALSMTPLN</sequence>
<reference key="1">
    <citation type="journal article" date="2008" name="Nucleic Acids Res.">
        <title>The complete nucleotide sequences of the five genetically distinct plastid genomes of Oenothera, subsection Oenothera: I. Sequence evaluation and plastome evolution.</title>
        <authorList>
            <person name="Greiner S."/>
            <person name="Wang X."/>
            <person name="Rauwolf U."/>
            <person name="Silber M.V."/>
            <person name="Mayer K."/>
            <person name="Meurer J."/>
            <person name="Haberer G."/>
            <person name="Herrmann R.G."/>
        </authorList>
    </citation>
    <scope>NUCLEOTIDE SEQUENCE [LARGE SCALE GENOMIC DNA]</scope>
    <source>
        <strain>cv. Atrovirens</strain>
    </source>
</reference>
<geneLocation type="chloroplast"/>
<keyword id="KW-0007">Acetylation</keyword>
<keyword id="KW-0148">Chlorophyll</keyword>
<keyword id="KW-0150">Chloroplast</keyword>
<keyword id="KW-0157">Chromophore</keyword>
<keyword id="KW-0464">Manganese</keyword>
<keyword id="KW-0472">Membrane</keyword>
<keyword id="KW-0479">Metal-binding</keyword>
<keyword id="KW-0597">Phosphoprotein</keyword>
<keyword id="KW-0602">Photosynthesis</keyword>
<keyword id="KW-0604">Photosystem II</keyword>
<keyword id="KW-0934">Plastid</keyword>
<keyword id="KW-0793">Thylakoid</keyword>
<keyword id="KW-0812">Transmembrane</keyword>
<keyword id="KW-1133">Transmembrane helix</keyword>
<proteinExistence type="inferred from homology"/>
<comment type="function">
    <text evidence="1">One of the components of the core complex of photosystem II (PSII). It binds chlorophyll and helps catalyze the primary light-induced photochemical processes of PSII. PSII is a light-driven water:plastoquinone oxidoreductase, using light energy to abstract electrons from H(2)O, generating O(2) and a proton gradient subsequently used for ATP formation.</text>
</comment>
<comment type="cofactor">
    <text evidence="1">Binds multiple chlorophylls and provides some of the ligands for the Ca-4Mn-5O cluster of the oxygen-evolving complex. It may also provide a ligand for a Cl- that is required for oxygen evolution. PSII binds additional chlorophylls, carotenoids and specific lipids.</text>
</comment>
<comment type="subunit">
    <text evidence="1">PSII is composed of 1 copy each of membrane proteins PsbA, PsbB, PsbC, PsbD, PsbE, PsbF, PsbH, PsbI, PsbJ, PsbK, PsbL, PsbM, PsbT, PsbX, PsbY, PsbZ, Psb30/Ycf12, at least 3 peripheral proteins of the oxygen-evolving complex and a large number of cofactors. It forms dimeric complexes.</text>
</comment>
<comment type="subcellular location">
    <subcellularLocation>
        <location evidence="1">Plastid</location>
        <location evidence="1">Chloroplast thylakoid membrane</location>
        <topology evidence="1">Multi-pass membrane protein</topology>
    </subcellularLocation>
</comment>
<comment type="similarity">
    <text evidence="1">Belongs to the PsbB/PsbC family. PsbC subfamily.</text>
</comment>
<dbReference type="EMBL" id="EU262891">
    <property type="protein sequence ID" value="ABX10116.1"/>
    <property type="molecule type" value="Genomic_DNA"/>
</dbReference>
<dbReference type="RefSeq" id="YP_001687446.1">
    <property type="nucleotide sequence ID" value="NC_010362.1"/>
</dbReference>
<dbReference type="SMR" id="B0Z5C3"/>
<dbReference type="GeneID" id="5955449"/>
<dbReference type="GO" id="GO:0009535">
    <property type="term" value="C:chloroplast thylakoid membrane"/>
    <property type="evidence" value="ECO:0007669"/>
    <property type="project" value="UniProtKB-SubCell"/>
</dbReference>
<dbReference type="GO" id="GO:0009523">
    <property type="term" value="C:photosystem II"/>
    <property type="evidence" value="ECO:0007669"/>
    <property type="project" value="UniProtKB-KW"/>
</dbReference>
<dbReference type="GO" id="GO:0016168">
    <property type="term" value="F:chlorophyll binding"/>
    <property type="evidence" value="ECO:0007669"/>
    <property type="project" value="UniProtKB-UniRule"/>
</dbReference>
<dbReference type="GO" id="GO:0045156">
    <property type="term" value="F:electron transporter, transferring electrons within the cyclic electron transport pathway of photosynthesis activity"/>
    <property type="evidence" value="ECO:0007669"/>
    <property type="project" value="InterPro"/>
</dbReference>
<dbReference type="GO" id="GO:0046872">
    <property type="term" value="F:metal ion binding"/>
    <property type="evidence" value="ECO:0007669"/>
    <property type="project" value="UniProtKB-KW"/>
</dbReference>
<dbReference type="GO" id="GO:0009772">
    <property type="term" value="P:photosynthetic electron transport in photosystem II"/>
    <property type="evidence" value="ECO:0007669"/>
    <property type="project" value="InterPro"/>
</dbReference>
<dbReference type="FunFam" id="1.10.10.670:FF:000001">
    <property type="entry name" value="Photosystem II CP43 reaction center protein"/>
    <property type="match status" value="1"/>
</dbReference>
<dbReference type="Gene3D" id="1.10.10.670">
    <property type="entry name" value="photosystem ii from thermosynechococcus elongatus"/>
    <property type="match status" value="1"/>
</dbReference>
<dbReference type="HAMAP" id="MF_01496">
    <property type="entry name" value="PSII_PsbC_CP43"/>
    <property type="match status" value="1"/>
</dbReference>
<dbReference type="InterPro" id="IPR000932">
    <property type="entry name" value="PS_antenna-like"/>
</dbReference>
<dbReference type="InterPro" id="IPR036001">
    <property type="entry name" value="PS_II_antenna-like_sf"/>
</dbReference>
<dbReference type="InterPro" id="IPR005869">
    <property type="entry name" value="PSII_PsbC"/>
</dbReference>
<dbReference type="InterPro" id="IPR044900">
    <property type="entry name" value="PSII_PsbC_sf"/>
</dbReference>
<dbReference type="NCBIfam" id="TIGR01153">
    <property type="entry name" value="psbC"/>
    <property type="match status" value="1"/>
</dbReference>
<dbReference type="Pfam" id="PF00421">
    <property type="entry name" value="PSII"/>
    <property type="match status" value="1"/>
</dbReference>
<dbReference type="SUPFAM" id="SSF161077">
    <property type="entry name" value="Photosystem II antenna protein-like"/>
    <property type="match status" value="1"/>
</dbReference>
<gene>
    <name evidence="1" type="primary">psbC</name>
</gene>
<protein>
    <recommendedName>
        <fullName evidence="1">Photosystem II CP43 reaction center protein</fullName>
    </recommendedName>
    <alternativeName>
        <fullName evidence="1">PSII 43 kDa protein</fullName>
    </alternativeName>
    <alternativeName>
        <fullName evidence="1">Protein CP-43</fullName>
    </alternativeName>
</protein>
<accession>B0Z5C3</accession>
<evidence type="ECO:0000255" key="1">
    <source>
        <dbReference type="HAMAP-Rule" id="MF_01496"/>
    </source>
</evidence>
<organism>
    <name type="scientific">Oenothera parviflora</name>
    <name type="common">Small-flowered evening primrose</name>
    <name type="synonym">Oenothera cruciata</name>
    <dbReference type="NCBI Taxonomy" id="482429"/>
    <lineage>
        <taxon>Eukaryota</taxon>
        <taxon>Viridiplantae</taxon>
        <taxon>Streptophyta</taxon>
        <taxon>Embryophyta</taxon>
        <taxon>Tracheophyta</taxon>
        <taxon>Spermatophyta</taxon>
        <taxon>Magnoliopsida</taxon>
        <taxon>eudicotyledons</taxon>
        <taxon>Gunneridae</taxon>
        <taxon>Pentapetalae</taxon>
        <taxon>rosids</taxon>
        <taxon>malvids</taxon>
        <taxon>Myrtales</taxon>
        <taxon>Onagraceae</taxon>
        <taxon>Onagroideae</taxon>
        <taxon>Onagreae</taxon>
        <taxon>Oenothera</taxon>
    </lineage>
</organism>